<proteinExistence type="inferred from homology"/>
<organism>
    <name type="scientific">Pseudomonas aeruginosa (strain LESB58)</name>
    <dbReference type="NCBI Taxonomy" id="557722"/>
    <lineage>
        <taxon>Bacteria</taxon>
        <taxon>Pseudomonadati</taxon>
        <taxon>Pseudomonadota</taxon>
        <taxon>Gammaproteobacteria</taxon>
        <taxon>Pseudomonadales</taxon>
        <taxon>Pseudomonadaceae</taxon>
        <taxon>Pseudomonas</taxon>
    </lineage>
</organism>
<name>PSRP_PSEA8</name>
<feature type="chain" id="PRO_1000136483" description="Putative phosphoenolpyruvate synthase regulatory protein">
    <location>
        <begin position="1"/>
        <end position="274"/>
    </location>
</feature>
<feature type="binding site" evidence="1">
    <location>
        <begin position="154"/>
        <end position="161"/>
    </location>
    <ligand>
        <name>ADP</name>
        <dbReference type="ChEBI" id="CHEBI:456216"/>
    </ligand>
</feature>
<sequence length="274" mass="31106">MQMKRTAFFISDGTGITAETLGQSLLAQFENISFVKLTRPYIDTEEKARAMVQQINNAAESDGARPIIFDTIVNRDIRAVLAQSNGFMIDIFATFLSPLEQELSADSSYSVGKSHSIGHNSNYMDRIEAVNFALDNDDGARTHYYDKADLILVGVSRCGKTPTCLYMALQYGIRAANYPLTEEDMERLQLPNALKQYKHKLFGLTIDPDRLTAIRNERKPNSRYASFAQCEFEVREVESLFRRENIAYINSTHFSVEEISAKILVEKGVERRFK</sequence>
<dbReference type="EC" id="2.7.11.33" evidence="1"/>
<dbReference type="EC" id="2.7.4.28" evidence="1"/>
<dbReference type="EMBL" id="FM209186">
    <property type="protein sequence ID" value="CAW28287.1"/>
    <property type="molecule type" value="Genomic_DNA"/>
</dbReference>
<dbReference type="SMR" id="B7VBB0"/>
<dbReference type="KEGG" id="pag:PLES_35601"/>
<dbReference type="HOGENOM" id="CLU_046206_1_0_6"/>
<dbReference type="GO" id="GO:0043531">
    <property type="term" value="F:ADP binding"/>
    <property type="evidence" value="ECO:0007669"/>
    <property type="project" value="UniProtKB-UniRule"/>
</dbReference>
<dbReference type="GO" id="GO:0005524">
    <property type="term" value="F:ATP binding"/>
    <property type="evidence" value="ECO:0007669"/>
    <property type="project" value="InterPro"/>
</dbReference>
<dbReference type="GO" id="GO:0016776">
    <property type="term" value="F:phosphotransferase activity, phosphate group as acceptor"/>
    <property type="evidence" value="ECO:0007669"/>
    <property type="project" value="UniProtKB-UniRule"/>
</dbReference>
<dbReference type="GO" id="GO:0004674">
    <property type="term" value="F:protein serine/threonine kinase activity"/>
    <property type="evidence" value="ECO:0007669"/>
    <property type="project" value="UniProtKB-UniRule"/>
</dbReference>
<dbReference type="HAMAP" id="MF_01062">
    <property type="entry name" value="PSRP"/>
    <property type="match status" value="1"/>
</dbReference>
<dbReference type="InterPro" id="IPR005177">
    <property type="entry name" value="Kinase-pyrophosphorylase"/>
</dbReference>
<dbReference type="InterPro" id="IPR026530">
    <property type="entry name" value="PSRP"/>
</dbReference>
<dbReference type="NCBIfam" id="NF003742">
    <property type="entry name" value="PRK05339.1"/>
    <property type="match status" value="1"/>
</dbReference>
<dbReference type="PANTHER" id="PTHR31756">
    <property type="entry name" value="PYRUVATE, PHOSPHATE DIKINASE REGULATORY PROTEIN 1, CHLOROPLASTIC"/>
    <property type="match status" value="1"/>
</dbReference>
<dbReference type="PANTHER" id="PTHR31756:SF3">
    <property type="entry name" value="PYRUVATE, PHOSPHATE DIKINASE REGULATORY PROTEIN 1, CHLOROPLASTIC"/>
    <property type="match status" value="1"/>
</dbReference>
<dbReference type="Pfam" id="PF03618">
    <property type="entry name" value="Kinase-PPPase"/>
    <property type="match status" value="1"/>
</dbReference>
<keyword id="KW-0418">Kinase</keyword>
<keyword id="KW-0547">Nucleotide-binding</keyword>
<keyword id="KW-0723">Serine/threonine-protein kinase</keyword>
<keyword id="KW-0808">Transferase</keyword>
<comment type="function">
    <text evidence="1">Bifunctional serine/threonine kinase and phosphorylase involved in the regulation of the phosphoenolpyruvate synthase (PEPS) by catalyzing its phosphorylation/dephosphorylation.</text>
</comment>
<comment type="catalytic activity">
    <reaction evidence="1">
        <text>[pyruvate, water dikinase] + ADP = [pyruvate, water dikinase]-phosphate + AMP + H(+)</text>
        <dbReference type="Rhea" id="RHEA:46020"/>
        <dbReference type="Rhea" id="RHEA-COMP:11425"/>
        <dbReference type="Rhea" id="RHEA-COMP:11426"/>
        <dbReference type="ChEBI" id="CHEBI:15378"/>
        <dbReference type="ChEBI" id="CHEBI:43176"/>
        <dbReference type="ChEBI" id="CHEBI:68546"/>
        <dbReference type="ChEBI" id="CHEBI:456215"/>
        <dbReference type="ChEBI" id="CHEBI:456216"/>
        <dbReference type="EC" id="2.7.11.33"/>
    </reaction>
</comment>
<comment type="catalytic activity">
    <reaction evidence="1">
        <text>[pyruvate, water dikinase]-phosphate + phosphate + H(+) = [pyruvate, water dikinase] + diphosphate</text>
        <dbReference type="Rhea" id="RHEA:48580"/>
        <dbReference type="Rhea" id="RHEA-COMP:11425"/>
        <dbReference type="Rhea" id="RHEA-COMP:11426"/>
        <dbReference type="ChEBI" id="CHEBI:15378"/>
        <dbReference type="ChEBI" id="CHEBI:33019"/>
        <dbReference type="ChEBI" id="CHEBI:43176"/>
        <dbReference type="ChEBI" id="CHEBI:43474"/>
        <dbReference type="ChEBI" id="CHEBI:68546"/>
        <dbReference type="EC" id="2.7.4.28"/>
    </reaction>
</comment>
<comment type="similarity">
    <text evidence="1">Belongs to the pyruvate, phosphate/water dikinase regulatory protein family. PSRP subfamily.</text>
</comment>
<protein>
    <recommendedName>
        <fullName evidence="1">Putative phosphoenolpyruvate synthase regulatory protein</fullName>
        <shortName evidence="1">PEP synthase regulatory protein</shortName>
        <shortName evidence="1">PSRP</shortName>
        <ecNumber evidence="1">2.7.11.33</ecNumber>
        <ecNumber evidence="1">2.7.4.28</ecNumber>
    </recommendedName>
    <alternativeName>
        <fullName evidence="1">Pyruvate, water dikinase regulatory protein</fullName>
    </alternativeName>
</protein>
<accession>B7VBB0</accession>
<gene>
    <name type="ordered locus">PLES_35601</name>
</gene>
<evidence type="ECO:0000255" key="1">
    <source>
        <dbReference type="HAMAP-Rule" id="MF_01062"/>
    </source>
</evidence>
<reference key="1">
    <citation type="journal article" date="2009" name="Genome Res.">
        <title>Newly introduced genomic prophage islands are critical determinants of in vivo competitiveness in the Liverpool epidemic strain of Pseudomonas aeruginosa.</title>
        <authorList>
            <person name="Winstanley C."/>
            <person name="Langille M.G.I."/>
            <person name="Fothergill J.L."/>
            <person name="Kukavica-Ibrulj I."/>
            <person name="Paradis-Bleau C."/>
            <person name="Sanschagrin F."/>
            <person name="Thomson N.R."/>
            <person name="Winsor G.L."/>
            <person name="Quail M.A."/>
            <person name="Lennard N."/>
            <person name="Bignell A."/>
            <person name="Clarke L."/>
            <person name="Seeger K."/>
            <person name="Saunders D."/>
            <person name="Harris D."/>
            <person name="Parkhill J."/>
            <person name="Hancock R.E.W."/>
            <person name="Brinkman F.S.L."/>
            <person name="Levesque R.C."/>
        </authorList>
    </citation>
    <scope>NUCLEOTIDE SEQUENCE [LARGE SCALE GENOMIC DNA]</scope>
    <source>
        <strain>LESB58</strain>
    </source>
</reference>